<name>Y907_HAEIN</name>
<sequence>MENKAERYQKAVNITDVLEQSPFAKIIKKGLAINEINQKFNRIFPQEFHGKFRIGNMTDNSIFIETANAIVRQGILFRQTELLKLIQEEFPQVTGFEITINPGF</sequence>
<organism>
    <name type="scientific">Haemophilus influenzae (strain ATCC 51907 / DSM 11121 / KW20 / Rd)</name>
    <dbReference type="NCBI Taxonomy" id="71421"/>
    <lineage>
        <taxon>Bacteria</taxon>
        <taxon>Pseudomonadati</taxon>
        <taxon>Pseudomonadota</taxon>
        <taxon>Gammaproteobacteria</taxon>
        <taxon>Pasteurellales</taxon>
        <taxon>Pasteurellaceae</taxon>
        <taxon>Haemophilus</taxon>
    </lineage>
</organism>
<feature type="chain" id="PRO_0000077972" description="Uncharacterized protein HI_0907">
    <location>
        <begin position="1"/>
        <end position="104"/>
    </location>
</feature>
<reference key="1">
    <citation type="journal article" date="1995" name="Science">
        <title>Whole-genome random sequencing and assembly of Haemophilus influenzae Rd.</title>
        <authorList>
            <person name="Fleischmann R.D."/>
            <person name="Adams M.D."/>
            <person name="White O."/>
            <person name="Clayton R.A."/>
            <person name="Kirkness E.F."/>
            <person name="Kerlavage A.R."/>
            <person name="Bult C.J."/>
            <person name="Tomb J.-F."/>
            <person name="Dougherty B.A."/>
            <person name="Merrick J.M."/>
            <person name="McKenney K."/>
            <person name="Sutton G.G."/>
            <person name="FitzHugh W."/>
            <person name="Fields C.A."/>
            <person name="Gocayne J.D."/>
            <person name="Scott J.D."/>
            <person name="Shirley R."/>
            <person name="Liu L.-I."/>
            <person name="Glodek A."/>
            <person name="Kelley J.M."/>
            <person name="Weidman J.F."/>
            <person name="Phillips C.A."/>
            <person name="Spriggs T."/>
            <person name="Hedblom E."/>
            <person name="Cotton M.D."/>
            <person name="Utterback T.R."/>
            <person name="Hanna M.C."/>
            <person name="Nguyen D.T."/>
            <person name="Saudek D.M."/>
            <person name="Brandon R.C."/>
            <person name="Fine L.D."/>
            <person name="Fritchman J.L."/>
            <person name="Fuhrmann J.L."/>
            <person name="Geoghagen N.S.M."/>
            <person name="Gnehm C.L."/>
            <person name="McDonald L.A."/>
            <person name="Small K.V."/>
            <person name="Fraser C.M."/>
            <person name="Smith H.O."/>
            <person name="Venter J.C."/>
        </authorList>
    </citation>
    <scope>NUCLEOTIDE SEQUENCE [LARGE SCALE GENOMIC DNA]</scope>
    <source>
        <strain>ATCC 51907 / DSM 11121 / KW20 / Rd</strain>
    </source>
</reference>
<proteinExistence type="predicted"/>
<accession>P44072</accession>
<keyword id="KW-1185">Reference proteome</keyword>
<dbReference type="EMBL" id="L42023">
    <property type="protein sequence ID" value="AAC22569.1"/>
    <property type="molecule type" value="Genomic_DNA"/>
</dbReference>
<dbReference type="PIR" id="I64015">
    <property type="entry name" value="I64015"/>
</dbReference>
<dbReference type="RefSeq" id="NP_439067.1">
    <property type="nucleotide sequence ID" value="NC_000907.1"/>
</dbReference>
<dbReference type="SMR" id="P44072"/>
<dbReference type="STRING" id="71421.HI_0907"/>
<dbReference type="EnsemblBacteria" id="AAC22569">
    <property type="protein sequence ID" value="AAC22569"/>
    <property type="gene ID" value="HI_0907"/>
</dbReference>
<dbReference type="KEGG" id="hin:HI_0907"/>
<dbReference type="PATRIC" id="fig|71421.8.peg.948"/>
<dbReference type="eggNOG" id="COG4701">
    <property type="taxonomic scope" value="Bacteria"/>
</dbReference>
<dbReference type="HOGENOM" id="CLU_170977_0_0_6"/>
<dbReference type="OrthoDB" id="5683143at2"/>
<dbReference type="BioCyc" id="HINF71421:G1GJ1-946-MONOMER"/>
<dbReference type="Proteomes" id="UP000000579">
    <property type="component" value="Chromosome"/>
</dbReference>
<dbReference type="InterPro" id="IPR007922">
    <property type="entry name" value="DciA-like"/>
</dbReference>
<dbReference type="Pfam" id="PF05258">
    <property type="entry name" value="DciA"/>
    <property type="match status" value="1"/>
</dbReference>
<gene>
    <name type="ordered locus">HI_0907</name>
</gene>
<protein>
    <recommendedName>
        <fullName>Uncharacterized protein HI_0907</fullName>
    </recommendedName>
</protein>